<accession>Q8R4T5</accession>
<reference key="1">
    <citation type="journal article" date="2002" name="J. Neurosci.">
        <title>Tamalin, a PDZ domain-containing protein, links a protein complex formation of group 1 metabotropic glutamate receptors and the guanine nucleotide exchange factor cytohesins.</title>
        <authorList>
            <person name="Kitano J."/>
            <person name="Kimura K."/>
            <person name="Yamazaki Y."/>
            <person name="Soda T."/>
            <person name="Shigemoto R."/>
            <person name="Nakajima Y."/>
            <person name="Nakanishi S."/>
        </authorList>
    </citation>
    <scope>NUCLEOTIDE SEQUENCE [MRNA]</scope>
    <scope>TISSUE SPECIFICITY</scope>
    <scope>INTERACTION WITH GRM1; GRM2; GRM3; GRM5 AND CYTH2</scope>
    <scope>SUBCELLULAR LOCATION</scope>
    <scope>FUNCTION</scope>
    <source>
        <tissue>Brain</tissue>
    </source>
</reference>
<reference key="2">
    <citation type="journal article" date="2012" name="Nat. Commun.">
        <title>Quantitative maps of protein phosphorylation sites across 14 different rat organs and tissues.</title>
        <authorList>
            <person name="Lundby A."/>
            <person name="Secher A."/>
            <person name="Lage K."/>
            <person name="Nordsborg N.B."/>
            <person name="Dmytriyev A."/>
            <person name="Lundby C."/>
            <person name="Olsen J.V."/>
        </authorList>
    </citation>
    <scope>PHOSPHORYLATION [LARGE SCALE ANALYSIS] AT SER-93 AND SER-386</scope>
    <scope>IDENTIFICATION BY MASS SPECTROMETRY [LARGE SCALE ANALYSIS]</scope>
</reference>
<feature type="chain" id="PRO_0000087586" description="General receptor for phosphoinositides 1-associated scaffold protein">
    <location>
        <begin position="1"/>
        <end position="394"/>
    </location>
</feature>
<feature type="domain" description="PDZ" evidence="4">
    <location>
        <begin position="100"/>
        <end position="189"/>
    </location>
</feature>
<feature type="region of interest" description="Disordered" evidence="5">
    <location>
        <begin position="1"/>
        <end position="51"/>
    </location>
</feature>
<feature type="region of interest" description="Interaction with PSCD3" evidence="1">
    <location>
        <begin position="180"/>
        <end position="257"/>
    </location>
</feature>
<feature type="region of interest" description="Disordered" evidence="5">
    <location>
        <begin position="293"/>
        <end position="318"/>
    </location>
</feature>
<feature type="compositionally biased region" description="Pro residues" evidence="5">
    <location>
        <begin position="37"/>
        <end position="49"/>
    </location>
</feature>
<feature type="compositionally biased region" description="Pro residues" evidence="5">
    <location>
        <begin position="296"/>
        <end position="306"/>
    </location>
</feature>
<feature type="modified residue" description="Phosphothreonine" evidence="3">
    <location>
        <position position="76"/>
    </location>
</feature>
<feature type="modified residue" description="Phosphoserine" evidence="8">
    <location>
        <position position="93"/>
    </location>
</feature>
<feature type="modified residue" description="Phosphotyrosine" evidence="2">
    <location>
        <position position="236"/>
    </location>
</feature>
<feature type="modified residue" description="Omega-N-methylarginine" evidence="3">
    <location>
        <position position="269"/>
    </location>
</feature>
<feature type="modified residue" description="Phosphoserine" evidence="8">
    <location>
        <position position="386"/>
    </location>
</feature>
<feature type="strand" evidence="10">
    <location>
        <begin position="98"/>
        <end position="104"/>
    </location>
</feature>
<feature type="strand" evidence="9">
    <location>
        <begin position="107"/>
        <end position="109"/>
    </location>
</feature>
<feature type="strand" evidence="10">
    <location>
        <begin position="112"/>
        <end position="119"/>
    </location>
</feature>
<feature type="strand" evidence="10">
    <location>
        <begin position="130"/>
        <end position="137"/>
    </location>
</feature>
<feature type="helix" evidence="10">
    <location>
        <begin position="142"/>
        <end position="145"/>
    </location>
</feature>
<feature type="strand" evidence="10">
    <location>
        <begin position="153"/>
        <end position="157"/>
    </location>
</feature>
<feature type="helix" evidence="10">
    <location>
        <begin position="167"/>
        <end position="176"/>
    </location>
</feature>
<feature type="turn" evidence="10">
    <location>
        <begin position="177"/>
        <end position="179"/>
    </location>
</feature>
<feature type="strand" evidence="10">
    <location>
        <begin position="180"/>
        <end position="186"/>
    </location>
</feature>
<comment type="function">
    <text evidence="6">Plays a role in intracellular trafficking and contributes to the macromolecular organization of group 1 metabotropic glutamate receptors (mGluRs) at synapses.</text>
</comment>
<comment type="subunit">
    <text evidence="3 6">Heteromer. Composed of TAMALIN, CYTH2 and at least one GRM1. Also interacts with CYTH3, GRM2, GRM3 and GRM5.</text>
</comment>
<comment type="interaction">
    <interactant intactId="EBI-7361884">
        <id>Q8R4T5</id>
    </interactant>
    <interactant intactId="EBI-2028211">
        <id>O35431</id>
        <label>Apba2</label>
    </interactant>
    <organismsDiffer>false</organismsDiffer>
    <experiments>4</experiments>
</comment>
<comment type="interaction">
    <interactant intactId="EBI-7361884">
        <id>Q8R4T5</id>
    </interactant>
    <interactant intactId="EBI-375655">
        <id>P31016</id>
        <label>Dlg4</label>
    </interactant>
    <organismsDiffer>false</organismsDiffer>
    <experiments>3</experiments>
</comment>
<comment type="interaction">
    <interactant intactId="EBI-7361884">
        <id>Q8R4T5</id>
    </interactant>
    <interactant intactId="EBI-375673">
        <id>P97838</id>
        <label>Dlgap3</label>
    </interactant>
    <organismsDiffer>false</organismsDiffer>
    <experiments>3</experiments>
</comment>
<comment type="interaction">
    <interactant intactId="EBI-7361884">
        <id>Q8R4T5</id>
    </interactant>
    <interactant intactId="EBI-2902734">
        <id>P31424</id>
        <label>Grm5</label>
    </interactant>
    <organismsDiffer>false</organismsDiffer>
    <experiments>5</experiments>
</comment>
<comment type="interaction">
    <interactant intactId="EBI-7361884">
        <id>Q8R4T5</id>
    </interactant>
    <interactant intactId="EBI-696179">
        <id>O88382</id>
        <label>Magi2</label>
    </interactant>
    <organismsDiffer>false</organismsDiffer>
    <experiments>5</experiments>
</comment>
<comment type="interaction">
    <interactant intactId="EBI-7361884">
        <id>Q8R4T5</id>
    </interactant>
    <interactant intactId="EBI-7361884">
        <id>Q8R4T5</id>
        <label>Tamalin</label>
    </interactant>
    <organismsDiffer>false</organismsDiffer>
    <experiments>3</experiments>
</comment>
<comment type="subcellular location">
    <subcellularLocation>
        <location evidence="6">Cytoplasm</location>
        <location evidence="6">Perinuclear region</location>
    </subcellularLocation>
    <subcellularLocation>
        <location evidence="6">Cell membrane</location>
        <topology evidence="6">Peripheral membrane protein</topology>
        <orientation evidence="6">Cytoplasmic side</orientation>
    </subcellularLocation>
    <subcellularLocation>
        <location evidence="6">Postsynaptic cell membrane</location>
    </subcellularLocation>
</comment>
<comment type="tissue specificity">
    <text evidence="6">Expressed in brain.</text>
</comment>
<name>GRASP_RAT</name>
<organism>
    <name type="scientific">Rattus norvegicus</name>
    <name type="common">Rat</name>
    <dbReference type="NCBI Taxonomy" id="10116"/>
    <lineage>
        <taxon>Eukaryota</taxon>
        <taxon>Metazoa</taxon>
        <taxon>Chordata</taxon>
        <taxon>Craniata</taxon>
        <taxon>Vertebrata</taxon>
        <taxon>Euteleostomi</taxon>
        <taxon>Mammalia</taxon>
        <taxon>Eutheria</taxon>
        <taxon>Euarchontoglires</taxon>
        <taxon>Glires</taxon>
        <taxon>Rodentia</taxon>
        <taxon>Myomorpha</taxon>
        <taxon>Muroidea</taxon>
        <taxon>Muridae</taxon>
        <taxon>Murinae</taxon>
        <taxon>Rattus</taxon>
    </lineage>
</organism>
<gene>
    <name evidence="7" type="primary">Tamalin</name>
    <name type="synonym">Grasp</name>
</gene>
<dbReference type="EMBL" id="AF374272">
    <property type="protein sequence ID" value="AAL87038.1"/>
    <property type="molecule type" value="mRNA"/>
</dbReference>
<dbReference type="RefSeq" id="NP_620249.1">
    <property type="nucleotide sequence ID" value="NM_138894.1"/>
</dbReference>
<dbReference type="PDB" id="2EGK">
    <property type="method" value="X-ray"/>
    <property type="resolution" value="2.85 A"/>
    <property type="chains" value="A/B/C/D=96-189"/>
</dbReference>
<dbReference type="PDB" id="2EGN">
    <property type="method" value="X-ray"/>
    <property type="resolution" value="2.40 A"/>
    <property type="chains" value="A=96-189"/>
</dbReference>
<dbReference type="PDB" id="2EGO">
    <property type="method" value="X-ray"/>
    <property type="resolution" value="1.80 A"/>
    <property type="chains" value="A/B=96-189"/>
</dbReference>
<dbReference type="PDBsum" id="2EGK"/>
<dbReference type="PDBsum" id="2EGN"/>
<dbReference type="PDBsum" id="2EGO"/>
<dbReference type="SMR" id="Q8R4T5"/>
<dbReference type="BioGRID" id="251380">
    <property type="interactions" value="19"/>
</dbReference>
<dbReference type="CORUM" id="Q8R4T5"/>
<dbReference type="ELM" id="Q8R4T5"/>
<dbReference type="FunCoup" id="Q8R4T5">
    <property type="interactions" value="493"/>
</dbReference>
<dbReference type="IntAct" id="Q8R4T5">
    <property type="interactions" value="16"/>
</dbReference>
<dbReference type="MINT" id="Q8R4T5"/>
<dbReference type="STRING" id="10116.ENSRNOP00000009979"/>
<dbReference type="GlyGen" id="Q8R4T5">
    <property type="glycosylation" value="1 site"/>
</dbReference>
<dbReference type="iPTMnet" id="Q8R4T5"/>
<dbReference type="PhosphoSitePlus" id="Q8R4T5"/>
<dbReference type="PaxDb" id="10116-ENSRNOP00000009979"/>
<dbReference type="Ensembl" id="ENSRNOT00000009979.4">
    <property type="protein sequence ID" value="ENSRNOP00000009979.1"/>
    <property type="gene ID" value="ENSRNOG00000007346.4"/>
</dbReference>
<dbReference type="GeneID" id="192254"/>
<dbReference type="KEGG" id="rno:192254"/>
<dbReference type="UCSC" id="RGD:70554">
    <property type="organism name" value="rat"/>
</dbReference>
<dbReference type="AGR" id="RGD:70554"/>
<dbReference type="CTD" id="160622"/>
<dbReference type="RGD" id="70554">
    <property type="gene designation" value="Tamalin"/>
</dbReference>
<dbReference type="eggNOG" id="KOG3528">
    <property type="taxonomic scope" value="Eukaryota"/>
</dbReference>
<dbReference type="GeneTree" id="ENSGT00530000063734"/>
<dbReference type="HOGENOM" id="CLU_058640_0_0_1"/>
<dbReference type="InParanoid" id="Q8R4T5"/>
<dbReference type="OMA" id="YQTCIYQ"/>
<dbReference type="PhylomeDB" id="Q8R4T5"/>
<dbReference type="TreeFam" id="TF316315"/>
<dbReference type="EvolutionaryTrace" id="Q8R4T5"/>
<dbReference type="PRO" id="PR:Q8R4T5"/>
<dbReference type="Proteomes" id="UP000002494">
    <property type="component" value="Chromosome 7"/>
</dbReference>
<dbReference type="Bgee" id="ENSRNOG00000007346">
    <property type="expression patterns" value="Expressed in frontal cortex and 18 other cell types or tissues"/>
</dbReference>
<dbReference type="ExpressionAtlas" id="Q8R4T5">
    <property type="expression patterns" value="baseline and differential"/>
</dbReference>
<dbReference type="GO" id="GO:0098978">
    <property type="term" value="C:glutamatergic synapse"/>
    <property type="evidence" value="ECO:0000314"/>
    <property type="project" value="SynGO"/>
</dbReference>
<dbReference type="GO" id="GO:0048471">
    <property type="term" value="C:perinuclear region of cytoplasm"/>
    <property type="evidence" value="ECO:0007669"/>
    <property type="project" value="UniProtKB-SubCell"/>
</dbReference>
<dbReference type="GO" id="GO:0005886">
    <property type="term" value="C:plasma membrane"/>
    <property type="evidence" value="ECO:0000266"/>
    <property type="project" value="RGD"/>
</dbReference>
<dbReference type="GO" id="GO:0014069">
    <property type="term" value="C:postsynaptic density"/>
    <property type="evidence" value="ECO:0000314"/>
    <property type="project" value="SynGO"/>
</dbReference>
<dbReference type="GO" id="GO:0045211">
    <property type="term" value="C:postsynaptic membrane"/>
    <property type="evidence" value="ECO:0007669"/>
    <property type="project" value="UniProtKB-SubCell"/>
</dbReference>
<dbReference type="GO" id="GO:0042802">
    <property type="term" value="F:identical protein binding"/>
    <property type="evidence" value="ECO:0000353"/>
    <property type="project" value="IntAct"/>
</dbReference>
<dbReference type="GO" id="GO:0030165">
    <property type="term" value="F:PDZ domain binding"/>
    <property type="evidence" value="ECO:0000314"/>
    <property type="project" value="RGD"/>
</dbReference>
<dbReference type="GO" id="GO:0031267">
    <property type="term" value="F:small GTPase binding"/>
    <property type="evidence" value="ECO:0000314"/>
    <property type="project" value="RGD"/>
</dbReference>
<dbReference type="GO" id="GO:0099149">
    <property type="term" value="P:regulation of postsynaptic neurotransmitter receptor internalization"/>
    <property type="evidence" value="ECO:0000266"/>
    <property type="project" value="RGD"/>
</dbReference>
<dbReference type="GO" id="GO:0007165">
    <property type="term" value="P:signal transduction"/>
    <property type="evidence" value="ECO:0000266"/>
    <property type="project" value="RGD"/>
</dbReference>
<dbReference type="CDD" id="cd06713">
    <property type="entry name" value="PDZ_tamalin_CYTIP-like"/>
    <property type="match status" value="1"/>
</dbReference>
<dbReference type="DisProt" id="DP02535"/>
<dbReference type="FunFam" id="2.30.42.10:FF:000157">
    <property type="entry name" value="General receptor for phosphoinositides 1-associated scaffold protein"/>
    <property type="match status" value="1"/>
</dbReference>
<dbReference type="Gene3D" id="2.30.42.10">
    <property type="match status" value="1"/>
</dbReference>
<dbReference type="InterPro" id="IPR052122">
    <property type="entry name" value="Intracell_Traff_Signaling_Reg"/>
</dbReference>
<dbReference type="InterPro" id="IPR001478">
    <property type="entry name" value="PDZ"/>
</dbReference>
<dbReference type="InterPro" id="IPR036034">
    <property type="entry name" value="PDZ_sf"/>
</dbReference>
<dbReference type="PANTHER" id="PTHR15963">
    <property type="entry name" value="GENERAL RECEPTOR FOR PHOSPHOINOSITIDES 1-ASSOCIATED SCAFFOLD PROTEIN-RELATED"/>
    <property type="match status" value="1"/>
</dbReference>
<dbReference type="PANTHER" id="PTHR15963:SF3">
    <property type="entry name" value="PROTEIN TAMALIN"/>
    <property type="match status" value="1"/>
</dbReference>
<dbReference type="Pfam" id="PF00595">
    <property type="entry name" value="PDZ"/>
    <property type="match status" value="1"/>
</dbReference>
<dbReference type="SMART" id="SM00228">
    <property type="entry name" value="PDZ"/>
    <property type="match status" value="1"/>
</dbReference>
<dbReference type="SUPFAM" id="SSF50156">
    <property type="entry name" value="PDZ domain-like"/>
    <property type="match status" value="1"/>
</dbReference>
<dbReference type="PROSITE" id="PS50106">
    <property type="entry name" value="PDZ"/>
    <property type="match status" value="1"/>
</dbReference>
<proteinExistence type="evidence at protein level"/>
<protein>
    <recommendedName>
        <fullName>General receptor for phosphoinositides 1-associated scaffold protein</fullName>
        <shortName>GRP1-associated scaffold protein</shortName>
    </recommendedName>
    <alternativeName>
        <fullName>95 kDa postsynaptic density protein discs-large ZO-1 domain-containing protein</fullName>
    </alternativeName>
    <alternativeName>
        <fullName>PSD-95 PDZ domain-containing protein</fullName>
    </alternativeName>
    <alternativeName>
        <fullName evidence="7">Tamalin</fullName>
    </alternativeName>
</protein>
<evidence type="ECO:0000250" key="1"/>
<evidence type="ECO:0000250" key="2">
    <source>
        <dbReference type="UniProtKB" id="Q7Z6J2"/>
    </source>
</evidence>
<evidence type="ECO:0000250" key="3">
    <source>
        <dbReference type="UniProtKB" id="Q9JJA9"/>
    </source>
</evidence>
<evidence type="ECO:0000255" key="4">
    <source>
        <dbReference type="PROSITE-ProRule" id="PRU00143"/>
    </source>
</evidence>
<evidence type="ECO:0000256" key="5">
    <source>
        <dbReference type="SAM" id="MobiDB-lite"/>
    </source>
</evidence>
<evidence type="ECO:0000269" key="6">
    <source>
    </source>
</evidence>
<evidence type="ECO:0000303" key="7">
    <source>
    </source>
</evidence>
<evidence type="ECO:0007744" key="8">
    <source>
    </source>
</evidence>
<evidence type="ECO:0007829" key="9">
    <source>
        <dbReference type="PDB" id="2EGK"/>
    </source>
</evidence>
<evidence type="ECO:0007829" key="10">
    <source>
        <dbReference type="PDB" id="2EGO"/>
    </source>
</evidence>
<keyword id="KW-0002">3D-structure</keyword>
<keyword id="KW-1003">Cell membrane</keyword>
<keyword id="KW-0963">Cytoplasm</keyword>
<keyword id="KW-0472">Membrane</keyword>
<keyword id="KW-0488">Methylation</keyword>
<keyword id="KW-0597">Phosphoprotein</keyword>
<keyword id="KW-0628">Postsynaptic cell membrane</keyword>
<keyword id="KW-1185">Reference proteome</keyword>
<keyword id="KW-0770">Synapse</keyword>
<sequence length="394" mass="42321">MTLRRLRKLQQKEEATAAPDLAGRAPDSEAARAAPTPSGPPAAAAPPGAPGDELYAALEDYHPAELYRALAVSGGTLPRRKGSGFRWKNFTQSPEQQRKVLTLEKGDNQTFGFEIQTYGLHHREEQRVEMVTFVCRVHESSPAQLAGLTPGDTIASVNGLNVEGIRHREIVDIIKASGNVLRLETLYGTSIRKAELEARLQYLKQTLYEKWGEYRSLMVQEQRLVHGLVVKDPSIYDTLESVRSCLYGAGLLPGSLPFGPLLAAPGGARGGSRRAKGDTDDAVYHTCFFGGAEPQALPPPPPPARAPGPGSAETPASVLCPAPRATLSRSASVRCAGPGGGGGGGAPGALWTEAREQALCGAGLRKTKYRSFRRRLLKFIPGLNRSLEEEESQL</sequence>